<proteinExistence type="inferred from homology"/>
<sequence>MYMSTDEIRRAFLAFFESKGHQIVESSSLVPANDPTLLFTNAGMNQFKDTFLGIEKRSYTRATTAQRCVRAGGKHNDLENVGFTARHHTFFEMLGNFSFGDYFKQDAIKYAWEFLTDVLGLPQDRLLVTIYETDDEAFDIWNKEMGIPADRIVRIGDNKGAPYASDNFWQMGDTGPCGPCSEIFYDHGEHIWGGRPGTPEEDGDRFIEIWNNVFMQFNRQADGTMEPLPKPSVDTGMGIERIAAIMQGVHSNYEIDIFQTLIKKSAEVIGYEDLSNQSLRVVADHIRSCAFLIVDGVMPSNEGRGYVLRRIIRRAVRHGNKLGASGAFFYKLVGPLAEIMGTAGDELKKRQALVEKILKIEEDNFGRTLDRGLTILNDALDNLSGKELDGETVFKLYDTYGFPADLTNDVARERDFTIDEEGFNNAMEAQRQRAREAGKFGVDYNESIKVDVNTEFCGYTGTAAQSSIVALYRDGEAVDSILAGEDALIILDNTPFYAESGGQCGDAGVLTAENTVFNVSDTQKFGAAIGHQGSLVQGALNVGDKLEAQVDVVRRTAITLNHSATHLLHSALRNLLGEHVAQKGSLVKPDALRFDFSNLEAVKPEQLREIERVVNEQIRLNHSIDTNIMDIESAKQKGAMALFGEKYDDEVRVLSMGEFSTELCGGIHAKNTGDIGLFKITSEGGIAAGIRRIEAVTGAAAIDALHAQEALLSETASIVKSDAASVATKVSALLAHSKQLEKDIQQLQDKLAAQESAGLLDQAKEINGVKVLITQLDGADNKALRGMLDEIKNKLGSGIVVLGNVSGDKVGLIVGVTKDLTGKVKAGELVNMVAQQVGGKGGGRPDMAQAGGTDAAALPAALESVTPWLTEKL</sequence>
<protein>
    <recommendedName>
        <fullName evidence="1">Alanine--tRNA ligase</fullName>
        <ecNumber evidence="1">6.1.1.7</ecNumber>
    </recommendedName>
    <alternativeName>
        <fullName evidence="1">Alanyl-tRNA synthetase</fullName>
        <shortName evidence="1">AlaRS</shortName>
    </alternativeName>
</protein>
<reference key="1">
    <citation type="journal article" date="2005" name="Science">
        <title>Life at depth: Photobacterium profundum genome sequence and expression analysis.</title>
        <authorList>
            <person name="Vezzi A."/>
            <person name="Campanaro S."/>
            <person name="D'Angelo M."/>
            <person name="Simonato F."/>
            <person name="Vitulo N."/>
            <person name="Lauro F.M."/>
            <person name="Cestaro A."/>
            <person name="Malacrida G."/>
            <person name="Simionati B."/>
            <person name="Cannata N."/>
            <person name="Romualdi C."/>
            <person name="Bartlett D.H."/>
            <person name="Valle G."/>
        </authorList>
    </citation>
    <scope>NUCLEOTIDE SEQUENCE [LARGE SCALE GENOMIC DNA]</scope>
    <source>
        <strain>ATCC BAA-1253 / SS9</strain>
    </source>
</reference>
<name>SYA_PHOPR</name>
<evidence type="ECO:0000255" key="1">
    <source>
        <dbReference type="HAMAP-Rule" id="MF_00036"/>
    </source>
</evidence>
<evidence type="ECO:0000305" key="2"/>
<gene>
    <name evidence="1" type="primary">alaS</name>
    <name type="ordered locus">PBPRA3067</name>
</gene>
<accession>Q6LMU3</accession>
<comment type="function">
    <text evidence="1">Catalyzes the attachment of alanine to tRNA(Ala) in a two-step reaction: alanine is first activated by ATP to form Ala-AMP and then transferred to the acceptor end of tRNA(Ala). Also edits incorrectly charged Ser-tRNA(Ala) and Gly-tRNA(Ala) via its editing domain.</text>
</comment>
<comment type="catalytic activity">
    <reaction evidence="1">
        <text>tRNA(Ala) + L-alanine + ATP = L-alanyl-tRNA(Ala) + AMP + diphosphate</text>
        <dbReference type="Rhea" id="RHEA:12540"/>
        <dbReference type="Rhea" id="RHEA-COMP:9657"/>
        <dbReference type="Rhea" id="RHEA-COMP:9923"/>
        <dbReference type="ChEBI" id="CHEBI:30616"/>
        <dbReference type="ChEBI" id="CHEBI:33019"/>
        <dbReference type="ChEBI" id="CHEBI:57972"/>
        <dbReference type="ChEBI" id="CHEBI:78442"/>
        <dbReference type="ChEBI" id="CHEBI:78497"/>
        <dbReference type="ChEBI" id="CHEBI:456215"/>
        <dbReference type="EC" id="6.1.1.7"/>
    </reaction>
</comment>
<comment type="cofactor">
    <cofactor evidence="1">
        <name>Zn(2+)</name>
        <dbReference type="ChEBI" id="CHEBI:29105"/>
    </cofactor>
    <text evidence="1">Binds 1 zinc ion per subunit.</text>
</comment>
<comment type="subcellular location">
    <subcellularLocation>
        <location evidence="1">Cytoplasm</location>
    </subcellularLocation>
</comment>
<comment type="domain">
    <text evidence="1">Consists of three domains; the N-terminal catalytic domain, the editing domain and the C-terminal C-Ala domain. The editing domain removes incorrectly charged amino acids, while the C-Ala domain, along with tRNA(Ala), serves as a bridge to cooperatively bring together the editing and aminoacylation centers thus stimulating deacylation of misacylated tRNAs.</text>
</comment>
<comment type="similarity">
    <text evidence="1">Belongs to the class-II aminoacyl-tRNA synthetase family.</text>
</comment>
<comment type="sequence caution" evidence="2">
    <conflict type="erroneous initiation">
        <sequence resource="EMBL-CDS" id="CAG21383"/>
    </conflict>
</comment>
<feature type="chain" id="PRO_0000075169" description="Alanine--tRNA ligase">
    <location>
        <begin position="1"/>
        <end position="873"/>
    </location>
</feature>
<feature type="binding site" evidence="1">
    <location>
        <position position="562"/>
    </location>
    <ligand>
        <name>Zn(2+)</name>
        <dbReference type="ChEBI" id="CHEBI:29105"/>
    </ligand>
</feature>
<feature type="binding site" evidence="1">
    <location>
        <position position="566"/>
    </location>
    <ligand>
        <name>Zn(2+)</name>
        <dbReference type="ChEBI" id="CHEBI:29105"/>
    </ligand>
</feature>
<feature type="binding site" evidence="1">
    <location>
        <position position="664"/>
    </location>
    <ligand>
        <name>Zn(2+)</name>
        <dbReference type="ChEBI" id="CHEBI:29105"/>
    </ligand>
</feature>
<feature type="binding site" evidence="1">
    <location>
        <position position="668"/>
    </location>
    <ligand>
        <name>Zn(2+)</name>
        <dbReference type="ChEBI" id="CHEBI:29105"/>
    </ligand>
</feature>
<organism>
    <name type="scientific">Photobacterium profundum (strain SS9)</name>
    <dbReference type="NCBI Taxonomy" id="298386"/>
    <lineage>
        <taxon>Bacteria</taxon>
        <taxon>Pseudomonadati</taxon>
        <taxon>Pseudomonadota</taxon>
        <taxon>Gammaproteobacteria</taxon>
        <taxon>Vibrionales</taxon>
        <taxon>Vibrionaceae</taxon>
        <taxon>Photobacterium</taxon>
    </lineage>
</organism>
<dbReference type="EC" id="6.1.1.7" evidence="1"/>
<dbReference type="EMBL" id="CR378673">
    <property type="protein sequence ID" value="CAG21383.1"/>
    <property type="status" value="ALT_INIT"/>
    <property type="molecule type" value="Genomic_DNA"/>
</dbReference>
<dbReference type="RefSeq" id="WP_041394510.1">
    <property type="nucleotide sequence ID" value="NC_006370.1"/>
</dbReference>
<dbReference type="SMR" id="Q6LMU3"/>
<dbReference type="STRING" id="298386.PBPRA3067"/>
<dbReference type="KEGG" id="ppr:PBPRA3067"/>
<dbReference type="eggNOG" id="COG0013">
    <property type="taxonomic scope" value="Bacteria"/>
</dbReference>
<dbReference type="HOGENOM" id="CLU_004485_1_1_6"/>
<dbReference type="Proteomes" id="UP000000593">
    <property type="component" value="Chromosome 1"/>
</dbReference>
<dbReference type="GO" id="GO:0005829">
    <property type="term" value="C:cytosol"/>
    <property type="evidence" value="ECO:0007669"/>
    <property type="project" value="TreeGrafter"/>
</dbReference>
<dbReference type="GO" id="GO:0004813">
    <property type="term" value="F:alanine-tRNA ligase activity"/>
    <property type="evidence" value="ECO:0007669"/>
    <property type="project" value="UniProtKB-UniRule"/>
</dbReference>
<dbReference type="GO" id="GO:0002161">
    <property type="term" value="F:aminoacyl-tRNA deacylase activity"/>
    <property type="evidence" value="ECO:0007669"/>
    <property type="project" value="TreeGrafter"/>
</dbReference>
<dbReference type="GO" id="GO:0005524">
    <property type="term" value="F:ATP binding"/>
    <property type="evidence" value="ECO:0007669"/>
    <property type="project" value="UniProtKB-UniRule"/>
</dbReference>
<dbReference type="GO" id="GO:0000049">
    <property type="term" value="F:tRNA binding"/>
    <property type="evidence" value="ECO:0007669"/>
    <property type="project" value="UniProtKB-KW"/>
</dbReference>
<dbReference type="GO" id="GO:0008270">
    <property type="term" value="F:zinc ion binding"/>
    <property type="evidence" value="ECO:0007669"/>
    <property type="project" value="UniProtKB-UniRule"/>
</dbReference>
<dbReference type="GO" id="GO:0006419">
    <property type="term" value="P:alanyl-tRNA aminoacylation"/>
    <property type="evidence" value="ECO:0007669"/>
    <property type="project" value="UniProtKB-UniRule"/>
</dbReference>
<dbReference type="GO" id="GO:0045892">
    <property type="term" value="P:negative regulation of DNA-templated transcription"/>
    <property type="evidence" value="ECO:0007669"/>
    <property type="project" value="TreeGrafter"/>
</dbReference>
<dbReference type="CDD" id="cd00673">
    <property type="entry name" value="AlaRS_core"/>
    <property type="match status" value="1"/>
</dbReference>
<dbReference type="FunFam" id="2.40.30.130:FF:000001">
    <property type="entry name" value="Alanine--tRNA ligase"/>
    <property type="match status" value="1"/>
</dbReference>
<dbReference type="FunFam" id="3.10.310.40:FF:000001">
    <property type="entry name" value="Alanine--tRNA ligase"/>
    <property type="match status" value="1"/>
</dbReference>
<dbReference type="FunFam" id="3.30.54.20:FF:000001">
    <property type="entry name" value="Alanine--tRNA ligase"/>
    <property type="match status" value="1"/>
</dbReference>
<dbReference type="FunFam" id="3.30.930.10:FF:000004">
    <property type="entry name" value="Alanine--tRNA ligase"/>
    <property type="match status" value="1"/>
</dbReference>
<dbReference type="FunFam" id="3.30.980.10:FF:000004">
    <property type="entry name" value="Alanine--tRNA ligase, cytoplasmic"/>
    <property type="match status" value="1"/>
</dbReference>
<dbReference type="Gene3D" id="2.40.30.130">
    <property type="match status" value="1"/>
</dbReference>
<dbReference type="Gene3D" id="3.10.310.40">
    <property type="match status" value="1"/>
</dbReference>
<dbReference type="Gene3D" id="3.30.54.20">
    <property type="match status" value="1"/>
</dbReference>
<dbReference type="Gene3D" id="6.10.250.550">
    <property type="match status" value="1"/>
</dbReference>
<dbReference type="Gene3D" id="3.30.930.10">
    <property type="entry name" value="Bira Bifunctional Protein, Domain 2"/>
    <property type="match status" value="1"/>
</dbReference>
<dbReference type="Gene3D" id="3.30.980.10">
    <property type="entry name" value="Threonyl-trna Synthetase, Chain A, domain 2"/>
    <property type="match status" value="1"/>
</dbReference>
<dbReference type="HAMAP" id="MF_00036_B">
    <property type="entry name" value="Ala_tRNA_synth_B"/>
    <property type="match status" value="1"/>
</dbReference>
<dbReference type="InterPro" id="IPR045864">
    <property type="entry name" value="aa-tRNA-synth_II/BPL/LPL"/>
</dbReference>
<dbReference type="InterPro" id="IPR002318">
    <property type="entry name" value="Ala-tRNA-lgiase_IIc"/>
</dbReference>
<dbReference type="InterPro" id="IPR018162">
    <property type="entry name" value="Ala-tRNA-ligase_IIc_anticod-bd"/>
</dbReference>
<dbReference type="InterPro" id="IPR018165">
    <property type="entry name" value="Ala-tRNA-synth_IIc_core"/>
</dbReference>
<dbReference type="InterPro" id="IPR018164">
    <property type="entry name" value="Ala-tRNA-synth_IIc_N"/>
</dbReference>
<dbReference type="InterPro" id="IPR050058">
    <property type="entry name" value="Ala-tRNA_ligase"/>
</dbReference>
<dbReference type="InterPro" id="IPR023033">
    <property type="entry name" value="Ala_tRNA_ligase_euk/bac"/>
</dbReference>
<dbReference type="InterPro" id="IPR003156">
    <property type="entry name" value="DHHA1_dom"/>
</dbReference>
<dbReference type="InterPro" id="IPR018163">
    <property type="entry name" value="Thr/Ala-tRNA-synth_IIc_edit"/>
</dbReference>
<dbReference type="InterPro" id="IPR009000">
    <property type="entry name" value="Transl_B-barrel_sf"/>
</dbReference>
<dbReference type="InterPro" id="IPR012947">
    <property type="entry name" value="tRNA_SAD"/>
</dbReference>
<dbReference type="NCBIfam" id="TIGR00344">
    <property type="entry name" value="alaS"/>
    <property type="match status" value="1"/>
</dbReference>
<dbReference type="PANTHER" id="PTHR11777:SF9">
    <property type="entry name" value="ALANINE--TRNA LIGASE, CYTOPLASMIC"/>
    <property type="match status" value="1"/>
</dbReference>
<dbReference type="PANTHER" id="PTHR11777">
    <property type="entry name" value="ALANYL-TRNA SYNTHETASE"/>
    <property type="match status" value="1"/>
</dbReference>
<dbReference type="Pfam" id="PF02272">
    <property type="entry name" value="DHHA1"/>
    <property type="match status" value="1"/>
</dbReference>
<dbReference type="Pfam" id="PF01411">
    <property type="entry name" value="tRNA-synt_2c"/>
    <property type="match status" value="1"/>
</dbReference>
<dbReference type="Pfam" id="PF07973">
    <property type="entry name" value="tRNA_SAD"/>
    <property type="match status" value="1"/>
</dbReference>
<dbReference type="PRINTS" id="PR00980">
    <property type="entry name" value="TRNASYNTHALA"/>
</dbReference>
<dbReference type="SMART" id="SM00863">
    <property type="entry name" value="tRNA_SAD"/>
    <property type="match status" value="1"/>
</dbReference>
<dbReference type="SUPFAM" id="SSF55681">
    <property type="entry name" value="Class II aaRS and biotin synthetases"/>
    <property type="match status" value="1"/>
</dbReference>
<dbReference type="SUPFAM" id="SSF101353">
    <property type="entry name" value="Putative anticodon-binding domain of alanyl-tRNA synthetase (AlaRS)"/>
    <property type="match status" value="1"/>
</dbReference>
<dbReference type="SUPFAM" id="SSF55186">
    <property type="entry name" value="ThrRS/AlaRS common domain"/>
    <property type="match status" value="1"/>
</dbReference>
<dbReference type="SUPFAM" id="SSF50447">
    <property type="entry name" value="Translation proteins"/>
    <property type="match status" value="1"/>
</dbReference>
<dbReference type="PROSITE" id="PS50860">
    <property type="entry name" value="AA_TRNA_LIGASE_II_ALA"/>
    <property type="match status" value="1"/>
</dbReference>
<keyword id="KW-0030">Aminoacyl-tRNA synthetase</keyword>
<keyword id="KW-0067">ATP-binding</keyword>
<keyword id="KW-0963">Cytoplasm</keyword>
<keyword id="KW-0436">Ligase</keyword>
<keyword id="KW-0479">Metal-binding</keyword>
<keyword id="KW-0547">Nucleotide-binding</keyword>
<keyword id="KW-0648">Protein biosynthesis</keyword>
<keyword id="KW-1185">Reference proteome</keyword>
<keyword id="KW-0694">RNA-binding</keyword>
<keyword id="KW-0820">tRNA-binding</keyword>
<keyword id="KW-0862">Zinc</keyword>